<comment type="function">
    <text evidence="1 2 7 9">A component of the bacterial microcompartment (BMC) shell dedicated to ethanolamine degradation (PubMed:22428024, PubMed:27063436). Forms a hexagonal trimer with 3 small channels and a large central pore that has been seen in both open and closed forms and is probably used for gated transport into and out of the BMC (By similarity). Ethanolamine-binding by the small channels has been hypothesized to stabilize the EutL central pore in a closed (non-transporting) state. An open pore is thought to be large enough to transport ATP and/or cobalamin (By similarity). Expression of eutK, eutL, eutM, eutN, eutS (eutSMNLK) in E.coli leads to formation of a single BMC (PubMed:22428024, PubMed:27063436). Coexpression of eutQ with eutSMNLK permits E.coli to make cells with more than one mobile BMC, as is usual in vivo (PubMed:27063436).</text>
</comment>
<comment type="function">
    <text evidence="6 8 13 14 15">The ethanolamine (EA) catabolic bacterial microcompartment (BMC) probably concentrates low levels of ethanolamine catabolic enzymes, concentrates volatile reaction intermediates, keeps the level of toxic acetaldehyde low, generates enough acetyl-CoA to support cell growth, and maintains a pool of free coenzyme A (CoA) and NAD (Probable) (PubMed:16585748). Deletion of BMC genes (eutK, eutL, eutM) restores growth of eutD deletions, suggesting there are dedicated pools of coenzyme A (CoA) and NAD in the BMC (PubMed:23585538).</text>
</comment>
<comment type="function">
    <text evidence="10 11">Expression of the eut operon allows this bacteria to use ethanolamine as a carbon, nitrogen and energy source. It relies on cobalamin (vitamin B12) both as a cofactor for the ethanolamine ammonia-lyase (EAL) activity and to induce the operon (PubMed:3045078). EA enhances bacterial survival in macrophages in a concentration-dependent manner, suggesting it is an important nutrient during infection (PubMed:29531136).</text>
</comment>
<comment type="pathway">
    <text evidence="11">Amine and polyamine degradation; ethanolamine degradation.</text>
</comment>
<comment type="subunit">
    <text evidence="1">Homotrimerizes to form a pseudohexamer.</text>
</comment>
<comment type="subcellular location">
    <subcellularLocation>
        <location evidence="9">Bacterial microcompartment</location>
    </subcellularLocation>
</comment>
<comment type="induction">
    <text evidence="11">Part of the 17-gene eut operon transcribed from a single promoter, induced by ethanolamine and adenosylcobalamin (AdoCbl, vitamin B12).</text>
</comment>
<comment type="domain">
    <text evidence="12">Has 2 BMC domains which can evolve independently of each other.</text>
</comment>
<comment type="disruption phenotype">
    <text evidence="4 5 6">Not required for aerobic growth on ethanolamine (EA) supplemented with cobalamin (vitamin B12) (PubMed:10464203). A double eutL-eutK strain grows as well as wild-type on EA and cyanocobalamin, but a quadruple eutL-eutK eutM-eutN strain does not grow (PubMed:16291677). A non-polar deletion mutant grows on EA at pH 5.5 to pH 7.0 but not at pH 8.0 or pH 8.5, releases increased amounts of acetaldehyde on EA plus vitamin B12. Preventing acetaldehyde vapor loss allow growth up to pH 8.5 (PubMed:16585748).</text>
</comment>
<comment type="biotechnology">
    <text evidence="7 9">Artificial BMCs can be made in E.coli by expressing eutK, eutL, eutM, eutN, eutS (eutSMNLK) or eutS alone. Cargo proteins can be targeted to them and beta-galactosidase (lacZ) was active within the BMC, showing the BMC allows passage of substrate into the interior. This can lead to the development of tailored BMCs for specific metabolic reactions (PubMed:22428024). The addition of eutQ to the eutSMNLK construct results in biogenesis of multiple BMCs (PubMed:27063436).</text>
</comment>
<comment type="miscellaneous">
    <text evidence="5">The need for a bacterial microcompartment in EA metabolism can be bypassed by increasing the levels of EAL and an acetaldehyde dehydrogenase (not necessarily EutE).</text>
</comment>
<comment type="similarity">
    <text evidence="3">Belongs to the EutL/PduB family.</text>
</comment>
<sequence>MPALDLIRPSVTAMRVIASVNDGFARELKLPPHIRSLGLITADSDDVTYIAADEATKQAMVEVVYGRSLYAGAAHGPSPTAGEVLIMLGGPNPAEVRAGLDAMVASIENGAAFQWANDAENTAFLAHVVSRTGSYLSSTAGIALGDPMAYLVAPPLEATFGIDAAMKSADVQLVTYVPPPSETNYSAAFLTGSQAACKAACNAFTDAVLDIARNPVQRA</sequence>
<feature type="chain" id="PRO_0000201518" description="Bacterial microcompartment shell protein EutL">
    <location>
        <begin position="1"/>
        <end position="219"/>
    </location>
</feature>
<feature type="domain" description="BMC circularly permuted 1" evidence="3">
    <location>
        <begin position="1"/>
        <end position="113"/>
    </location>
</feature>
<feature type="domain" description="BMC circularly permuted 2" evidence="3">
    <location>
        <begin position="114"/>
        <end position="215"/>
    </location>
</feature>
<feature type="binding site" evidence="2">
    <location>
        <position position="45"/>
    </location>
    <ligand>
        <name>ethanolamine</name>
        <dbReference type="ChEBI" id="CHEBI:57603"/>
        <label>1</label>
    </ligand>
</feature>
<feature type="binding site" evidence="2">
    <location>
        <position position="46"/>
    </location>
    <ligand>
        <name>ethanolamine</name>
        <dbReference type="ChEBI" id="CHEBI:57603"/>
        <label>2</label>
    </ligand>
</feature>
<feature type="binding site" evidence="2">
    <location>
        <position position="83"/>
    </location>
    <ligand>
        <name>ethanolamine</name>
        <dbReference type="ChEBI" id="CHEBI:57603"/>
        <label>1</label>
    </ligand>
</feature>
<feature type="binding site" evidence="2">
    <location>
        <position position="113"/>
    </location>
    <ligand>
        <name>ethanolamine</name>
        <dbReference type="ChEBI" id="CHEBI:57603"/>
        <label>1</label>
    </ligand>
</feature>
<feature type="binding site" evidence="2">
    <location>
        <begin position="183"/>
        <end position="185"/>
    </location>
    <ligand>
        <name>ethanolamine</name>
        <dbReference type="ChEBI" id="CHEBI:57603"/>
        <label>1</label>
    </ligand>
</feature>
<feature type="site" description="Important for gating" evidence="2">
    <location>
        <position position="70"/>
    </location>
</feature>
<feature type="site" description="Important for gating" evidence="2">
    <location>
        <position position="184"/>
    </location>
</feature>
<gene>
    <name type="primary">eutL</name>
    <name type="ordered locus">STM2456</name>
</gene>
<evidence type="ECO:0000250" key="1">
    <source>
        <dbReference type="UniProtKB" id="P76541"/>
    </source>
</evidence>
<evidence type="ECO:0000250" key="2">
    <source>
        <dbReference type="UniProtKB" id="Q8XLZ0"/>
    </source>
</evidence>
<evidence type="ECO:0000255" key="3">
    <source>
        <dbReference type="PROSITE-ProRule" id="PRU01279"/>
    </source>
</evidence>
<evidence type="ECO:0000269" key="4">
    <source>
    </source>
</evidence>
<evidence type="ECO:0000269" key="5">
    <source>
    </source>
</evidence>
<evidence type="ECO:0000269" key="6">
    <source>
    </source>
</evidence>
<evidence type="ECO:0000269" key="7">
    <source>
    </source>
</evidence>
<evidence type="ECO:0000269" key="8">
    <source>
    </source>
</evidence>
<evidence type="ECO:0000269" key="9">
    <source>
    </source>
</evidence>
<evidence type="ECO:0000269" key="10">
    <source>
    </source>
</evidence>
<evidence type="ECO:0000269" key="11">
    <source>
    </source>
</evidence>
<evidence type="ECO:0000305" key="12"/>
<evidence type="ECO:0000305" key="13">
    <source>
    </source>
</evidence>
<evidence type="ECO:0000305" key="14">
    <source>
    </source>
</evidence>
<evidence type="ECO:0000305" key="15">
    <source>
    </source>
</evidence>
<reference key="1">
    <citation type="journal article" date="1999" name="J. Bacteriol.">
        <title>The 17-gene ethanolamine (eut) operon of Salmonella typhimurium encodes five homologues of carboxysome shell proteins.</title>
        <authorList>
            <person name="Kofoid E.C."/>
            <person name="Rappleye C.A."/>
            <person name="Stojiljkovic I."/>
            <person name="Roth J.R."/>
        </authorList>
    </citation>
    <scope>NUCLEOTIDE SEQUENCE [GENOMIC DNA]</scope>
    <scope>DISRUPTION PHENOTYPE</scope>
    <source>
        <strain>LT2</strain>
    </source>
</reference>
<reference key="2">
    <citation type="journal article" date="2001" name="Nature">
        <title>Complete genome sequence of Salmonella enterica serovar Typhimurium LT2.</title>
        <authorList>
            <person name="McClelland M."/>
            <person name="Sanderson K.E."/>
            <person name="Spieth J."/>
            <person name="Clifton S.W."/>
            <person name="Latreille P."/>
            <person name="Courtney L."/>
            <person name="Porwollik S."/>
            <person name="Ali J."/>
            <person name="Dante M."/>
            <person name="Du F."/>
            <person name="Hou S."/>
            <person name="Layman D."/>
            <person name="Leonard S."/>
            <person name="Nguyen C."/>
            <person name="Scott K."/>
            <person name="Holmes A."/>
            <person name="Grewal N."/>
            <person name="Mulvaney E."/>
            <person name="Ryan E."/>
            <person name="Sun H."/>
            <person name="Florea L."/>
            <person name="Miller W."/>
            <person name="Stoneking T."/>
            <person name="Nhan M."/>
            <person name="Waterston R."/>
            <person name="Wilson R.K."/>
        </authorList>
    </citation>
    <scope>NUCLEOTIDE SEQUENCE [LARGE SCALE GENOMIC DNA]</scope>
    <source>
        <strain>LT2 / SGSC1412 / ATCC 700720</strain>
    </source>
</reference>
<reference key="3">
    <citation type="journal article" date="1988" name="J. Bacteriol.">
        <title>Ethanolamine utilization in Salmonella typhimurium.</title>
        <authorList>
            <person name="Roof D.M."/>
            <person name="Roth J.R."/>
        </authorList>
    </citation>
    <scope>FUNCTION</scope>
    <scope>PATHWAY</scope>
    <scope>OPERON</scope>
    <scope>INDUCTION BY ETHANOLAMINE AND COBALAMIN</scope>
    <source>
        <strain>LT2</strain>
    </source>
</reference>
<reference key="4">
    <citation type="journal article" date="2005" name="J. Bacteriol.">
        <title>Minimal functions and physiological conditions required for growth of salmonella enterica on ethanolamine in the absence of the metabolosome.</title>
        <authorList>
            <person name="Brinsmade S.R."/>
            <person name="Paldon T."/>
            <person name="Escalante-Semerena J.C."/>
        </authorList>
    </citation>
    <scope>FUNCTION</scope>
    <scope>DISRUPTION PHENOTYPE</scope>
    <source>
        <strain>LT2</strain>
    </source>
</reference>
<reference key="5">
    <citation type="journal article" date="2006" name="J. Bacteriol.">
        <title>Conserving a volatile metabolite: a role for carboxysome-like organelles in Salmonella enterica.</title>
        <authorList>
            <person name="Penrod J.T."/>
            <person name="Roth J.R."/>
        </authorList>
    </citation>
    <scope>FUNCTION</scope>
    <scope>DISRUPTION PHENOTYPE</scope>
    <source>
        <strain>LT2</strain>
    </source>
</reference>
<reference key="6">
    <citation type="journal article" date="2012" name="PLoS ONE">
        <title>Engineered protein nano-compartments for targeted enzyme localization.</title>
        <authorList>
            <person name="Choudhary S."/>
            <person name="Quin M.B."/>
            <person name="Sanders M.A."/>
            <person name="Johnson E.T."/>
            <person name="Schmidt-Dannert C."/>
        </authorList>
    </citation>
    <scope>FUNCTION</scope>
    <scope>SUBCELLULAR LOCATION</scope>
    <scope>BIOTECHNOLOGY</scope>
    <source>
        <strain>LT2</strain>
    </source>
</reference>
<reference key="7">
    <citation type="journal article" date="2013" name="J. Bacteriol.">
        <title>Evidence that a metabolic microcompartment contains and recycles private cofactor pools.</title>
        <authorList>
            <person name="Huseby D.L."/>
            <person name="Roth J.R."/>
        </authorList>
    </citation>
    <scope>FUNCTION</scope>
    <scope>DISRUPTION PHENOTYPE</scope>
    <source>
        <strain>LT2</strain>
    </source>
</reference>
<reference key="8">
    <citation type="journal article" date="2016" name="Sci. Rep.">
        <title>Engineering formation of multiple recombinant Eut protein nanocompartments in E. coli.</title>
        <authorList>
            <person name="Held M."/>
            <person name="Kolb A."/>
            <person name="Perdue S."/>
            <person name="Hsu S.Y."/>
            <person name="Bloch S.E."/>
            <person name="Quin M.B."/>
            <person name="Schmidt-Dannert C."/>
        </authorList>
    </citation>
    <scope>FUNCTION</scope>
    <scope>IDENTIFICATION BY MASS SPECTROMETRY</scope>
    <scope>SUBCELLULAR LOCATION</scope>
    <scope>BIOTECHNOLOGY</scope>
    <source>
        <strain>LT2</strain>
    </source>
</reference>
<reference key="9">
    <citation type="journal article" date="2018" name="Infect. Immun.">
        <title>The Ethanolamine Permease EutH Promotes Vacuole Adaptation of Salmonella enterica and Listeria monocytogenes during Macrophage Infection.</title>
        <authorList>
            <person name="Anderson C.J."/>
            <person name="Satkovich J."/>
            <person name="Koeseoglu V.K."/>
            <person name="Agaisse H."/>
            <person name="Kendall M.M."/>
        </authorList>
    </citation>
    <scope>FUNCTION</scope>
    <source>
        <strain>SL1344</strain>
    </source>
</reference>
<name>EUTL_SALTY</name>
<proteinExistence type="evidence at protein level"/>
<organism>
    <name type="scientific">Salmonella typhimurium (strain LT2 / SGSC1412 / ATCC 700720)</name>
    <dbReference type="NCBI Taxonomy" id="99287"/>
    <lineage>
        <taxon>Bacteria</taxon>
        <taxon>Pseudomonadati</taxon>
        <taxon>Pseudomonadota</taxon>
        <taxon>Gammaproteobacteria</taxon>
        <taxon>Enterobacterales</taxon>
        <taxon>Enterobacteriaceae</taxon>
        <taxon>Salmonella</taxon>
    </lineage>
</organism>
<accession>P0A1C9</accession>
<accession>Q9ZFU9</accession>
<keyword id="KW-1283">Bacterial microcompartment</keyword>
<keyword id="KW-1185">Reference proteome</keyword>
<keyword id="KW-0843">Virulence</keyword>
<protein>
    <recommendedName>
        <fullName>Bacterial microcompartment shell protein EutL</fullName>
    </recommendedName>
    <alternativeName>
        <fullName evidence="12">BMC-T</fullName>
    </alternativeName>
    <alternativeName>
        <fullName>Ethanolamine utilization protein EutL</fullName>
    </alternativeName>
</protein>
<dbReference type="EMBL" id="AF093749">
    <property type="protein sequence ID" value="AAC78125.1"/>
    <property type="molecule type" value="Genomic_DNA"/>
</dbReference>
<dbReference type="EMBL" id="AE006468">
    <property type="protein sequence ID" value="AAL21350.1"/>
    <property type="molecule type" value="Genomic_DNA"/>
</dbReference>
<dbReference type="RefSeq" id="NP_461391.1">
    <property type="nucleotide sequence ID" value="NC_003197.2"/>
</dbReference>
<dbReference type="RefSeq" id="WP_001111056.1">
    <property type="nucleotide sequence ID" value="NC_003197.2"/>
</dbReference>
<dbReference type="SMR" id="P0A1C9"/>
<dbReference type="STRING" id="99287.STM2456"/>
<dbReference type="PaxDb" id="99287-STM2456"/>
<dbReference type="GeneID" id="1253978"/>
<dbReference type="KEGG" id="stm:STM2456"/>
<dbReference type="PATRIC" id="fig|99287.12.peg.2594"/>
<dbReference type="HOGENOM" id="CLU_1270774_0_0_6"/>
<dbReference type="OMA" id="HCISRTG"/>
<dbReference type="PhylomeDB" id="P0A1C9"/>
<dbReference type="BioCyc" id="SENT99287:STM2456-MONOMER"/>
<dbReference type="UniPathway" id="UPA00560"/>
<dbReference type="Proteomes" id="UP000001014">
    <property type="component" value="Chromosome"/>
</dbReference>
<dbReference type="GO" id="GO:0031471">
    <property type="term" value="C:ethanolamine degradation polyhedral organelle"/>
    <property type="evidence" value="ECO:0000314"/>
    <property type="project" value="UniProtKB"/>
</dbReference>
<dbReference type="GO" id="GO:0005198">
    <property type="term" value="F:structural molecule activity"/>
    <property type="evidence" value="ECO:0007669"/>
    <property type="project" value="InterPro"/>
</dbReference>
<dbReference type="GO" id="GO:0046336">
    <property type="term" value="P:ethanolamine catabolic process"/>
    <property type="evidence" value="ECO:0007669"/>
    <property type="project" value="UniProtKB-UniPathway"/>
</dbReference>
<dbReference type="GO" id="GO:0006091">
    <property type="term" value="P:generation of precursor metabolites and energy"/>
    <property type="evidence" value="ECO:0000315"/>
    <property type="project" value="UniProtKB"/>
</dbReference>
<dbReference type="CDD" id="cd07050">
    <property type="entry name" value="BMC_EutL_repeat2"/>
    <property type="match status" value="1"/>
</dbReference>
<dbReference type="FunFam" id="3.30.70.1710:FF:000004">
    <property type="entry name" value="Ethanolamine utilization microcompartment protein EutL"/>
    <property type="match status" value="1"/>
</dbReference>
<dbReference type="FunFam" id="3.30.70.1710:FF:000003">
    <property type="entry name" value="Ethanolamine utilization protein EutL"/>
    <property type="match status" value="1"/>
</dbReference>
<dbReference type="Gene3D" id="3.30.70.1710">
    <property type="match status" value="2"/>
</dbReference>
<dbReference type="InterPro" id="IPR044870">
    <property type="entry name" value="BMC_CP"/>
</dbReference>
<dbReference type="InterPro" id="IPR000249">
    <property type="entry name" value="BMC_dom"/>
</dbReference>
<dbReference type="InterPro" id="IPR037233">
    <property type="entry name" value="CcmK-like_sf"/>
</dbReference>
<dbReference type="InterPro" id="IPR030983">
    <property type="entry name" value="EutL"/>
</dbReference>
<dbReference type="InterPro" id="IPR009193">
    <property type="entry name" value="EutL_PduB"/>
</dbReference>
<dbReference type="NCBIfam" id="TIGR04502">
    <property type="entry name" value="microcomp_EutL"/>
    <property type="match status" value="1"/>
</dbReference>
<dbReference type="NCBIfam" id="NF011934">
    <property type="entry name" value="PRK15405.1"/>
    <property type="match status" value="1"/>
</dbReference>
<dbReference type="Pfam" id="PF00936">
    <property type="entry name" value="BMC"/>
    <property type="match status" value="2"/>
</dbReference>
<dbReference type="PIRSF" id="PIRSF012290">
    <property type="entry name" value="EutL_PduB"/>
    <property type="match status" value="1"/>
</dbReference>
<dbReference type="SMART" id="SM00877">
    <property type="entry name" value="BMC"/>
    <property type="match status" value="2"/>
</dbReference>
<dbReference type="SUPFAM" id="SSF143414">
    <property type="entry name" value="CcmK-like"/>
    <property type="match status" value="1"/>
</dbReference>
<dbReference type="PROSITE" id="PS51931">
    <property type="entry name" value="BMC_CP"/>
    <property type="match status" value="2"/>
</dbReference>